<name>CSPLG_POPTR</name>
<sequence>MALEIPKIEAILRGIAILLLVSTACLVGLDSQTKFVIVYEKEVTYKDLHALVVLVYVDAVAAAYNLLQLCRCSVSALSKGNFKGSYRYLSWACFVLDQLAAYTTFAAHSAALQHSVLGITGAKVFQWMKWCNRFTRFCFQIGGALTCGYIASVLMVMISFISAFNLFRLYSPKHFLRLKGT</sequence>
<proteinExistence type="inferred from homology"/>
<reference key="1">
    <citation type="journal article" date="2006" name="Science">
        <title>The genome of black cottonwood, Populus trichocarpa (Torr. &amp; Gray).</title>
        <authorList>
            <person name="Tuskan G.A."/>
            <person name="Difazio S."/>
            <person name="Jansson S."/>
            <person name="Bohlmann J."/>
            <person name="Grigoriev I."/>
            <person name="Hellsten U."/>
            <person name="Putnam N."/>
            <person name="Ralph S."/>
            <person name="Rombauts S."/>
            <person name="Salamov A."/>
            <person name="Schein J."/>
            <person name="Sterck L."/>
            <person name="Aerts A."/>
            <person name="Bhalerao R.R."/>
            <person name="Bhalerao R.P."/>
            <person name="Blaudez D."/>
            <person name="Boerjan W."/>
            <person name="Brun A."/>
            <person name="Brunner A."/>
            <person name="Busov V."/>
            <person name="Campbell M."/>
            <person name="Carlson J."/>
            <person name="Chalot M."/>
            <person name="Chapman J."/>
            <person name="Chen G.-L."/>
            <person name="Cooper D."/>
            <person name="Coutinho P.M."/>
            <person name="Couturier J."/>
            <person name="Covert S."/>
            <person name="Cronk Q."/>
            <person name="Cunningham R."/>
            <person name="Davis J."/>
            <person name="Degroeve S."/>
            <person name="Dejardin A."/>
            <person name="dePamphilis C.W."/>
            <person name="Detter J."/>
            <person name="Dirks B."/>
            <person name="Dubchak I."/>
            <person name="Duplessis S."/>
            <person name="Ehlting J."/>
            <person name="Ellis B."/>
            <person name="Gendler K."/>
            <person name="Goodstein D."/>
            <person name="Gribskov M."/>
            <person name="Grimwood J."/>
            <person name="Groover A."/>
            <person name="Gunter L."/>
            <person name="Hamberger B."/>
            <person name="Heinze B."/>
            <person name="Helariutta Y."/>
            <person name="Henrissat B."/>
            <person name="Holligan D."/>
            <person name="Holt R."/>
            <person name="Huang W."/>
            <person name="Islam-Faridi N."/>
            <person name="Jones S."/>
            <person name="Jones-Rhoades M."/>
            <person name="Jorgensen R."/>
            <person name="Joshi C."/>
            <person name="Kangasjaervi J."/>
            <person name="Karlsson J."/>
            <person name="Kelleher C."/>
            <person name="Kirkpatrick R."/>
            <person name="Kirst M."/>
            <person name="Kohler A."/>
            <person name="Kalluri U."/>
            <person name="Larimer F."/>
            <person name="Leebens-Mack J."/>
            <person name="Leple J.-C."/>
            <person name="Locascio P."/>
            <person name="Lou Y."/>
            <person name="Lucas S."/>
            <person name="Martin F."/>
            <person name="Montanini B."/>
            <person name="Napoli C."/>
            <person name="Nelson D.R."/>
            <person name="Nelson C."/>
            <person name="Nieminen K."/>
            <person name="Nilsson O."/>
            <person name="Pereda V."/>
            <person name="Peter G."/>
            <person name="Philippe R."/>
            <person name="Pilate G."/>
            <person name="Poliakov A."/>
            <person name="Razumovskaya J."/>
            <person name="Richardson P."/>
            <person name="Rinaldi C."/>
            <person name="Ritland K."/>
            <person name="Rouze P."/>
            <person name="Ryaboy D."/>
            <person name="Schmutz J."/>
            <person name="Schrader J."/>
            <person name="Segerman B."/>
            <person name="Shin H."/>
            <person name="Siddiqui A."/>
            <person name="Sterky F."/>
            <person name="Terry A."/>
            <person name="Tsai C.-J."/>
            <person name="Uberbacher E."/>
            <person name="Unneberg P."/>
            <person name="Vahala J."/>
            <person name="Wall K."/>
            <person name="Wessler S."/>
            <person name="Yang G."/>
            <person name="Yin T."/>
            <person name="Douglas C."/>
            <person name="Marra M."/>
            <person name="Sandberg G."/>
            <person name="Van de Peer Y."/>
            <person name="Rokhsar D.S."/>
        </authorList>
    </citation>
    <scope>NUCLEOTIDE SEQUENCE [LARGE SCALE GENOMIC DNA]</scope>
    <source>
        <strain>cv. Nisqually</strain>
    </source>
</reference>
<reference key="2">
    <citation type="submission" date="2008-12" db="EMBL/GenBank/DDBJ databases">
        <authorList>
            <consortium name="US DOE Joint Genome Institute (JGI-PGF)"/>
            <person name="Grigoriev I.V."/>
            <person name="Terry A."/>
            <person name="Salamov A.A."/>
            <person name="Otillar R."/>
            <person name="Lou Y."/>
            <person name="Lucas S."/>
            <person name="Hammon N."/>
            <person name="Glavina del Rio T."/>
            <person name="Detter J."/>
            <person name="Kalin E."/>
            <person name="Tice H."/>
            <person name="Pitluck S."/>
            <person name="Chapman J."/>
            <person name="Putnam N.H."/>
            <person name="Brunner A."/>
            <person name="Busov V."/>
            <person name="Campbell M."/>
            <person name="Chalot M."/>
            <person name="Covert S."/>
            <person name="Davis J."/>
            <person name="DiFazio S."/>
            <person name="Gribskov M."/>
            <person name="Gunter L."/>
            <person name="Hamberger B."/>
            <person name="Jansson S."/>
            <person name="Joshi C."/>
            <person name="Larimer F."/>
            <person name="Martin F."/>
            <person name="Napoli C."/>
            <person name="Nelson D."/>
            <person name="Ralph S."/>
            <person name="Rombauts S."/>
            <person name="Rouze P."/>
            <person name="Schrader J."/>
            <person name="Tsai C."/>
            <person name="Vahala J."/>
            <person name="Tuskan G."/>
            <person name="Rokhsar D."/>
        </authorList>
    </citation>
    <scope>GENOME REANNOTATION</scope>
    <source>
        <strain>cv. Nisqually</strain>
    </source>
</reference>
<reference key="3">
    <citation type="journal article" date="2014" name="Plant Physiol.">
        <title>Functional and evolutionary analysis of the CASPARIAN STRIP MEMBRANE DOMAIN PROTEIN family.</title>
        <authorList>
            <person name="Roppolo D."/>
            <person name="Boeckmann B."/>
            <person name="Pfister A."/>
            <person name="Boutet E."/>
            <person name="Rubio M.C."/>
            <person name="Denervaud-Tendon V."/>
            <person name="Vermeer J.E."/>
            <person name="Gheyselinck J."/>
            <person name="Xenarios I."/>
            <person name="Geldner N."/>
        </authorList>
    </citation>
    <scope>GENE FAMILY</scope>
    <scope>NOMENCLATURE</scope>
</reference>
<comment type="subunit">
    <text evidence="1">Homodimer and heterodimers.</text>
</comment>
<comment type="subcellular location">
    <subcellularLocation>
        <location evidence="1">Cell membrane</location>
        <topology evidence="1">Multi-pass membrane protein</topology>
    </subcellularLocation>
</comment>
<comment type="similarity">
    <text evidence="3">Belongs to the Casparian strip membrane proteins (CASP) family.</text>
</comment>
<comment type="sequence caution" evidence="3">
    <conflict type="erroneous gene model prediction">
        <sequence resource="EMBL-CDS" id="EEF03629"/>
    </conflict>
</comment>
<organism>
    <name type="scientific">Populus trichocarpa</name>
    <name type="common">Western balsam poplar</name>
    <name type="synonym">Populus balsamifera subsp. trichocarpa</name>
    <dbReference type="NCBI Taxonomy" id="3694"/>
    <lineage>
        <taxon>Eukaryota</taxon>
        <taxon>Viridiplantae</taxon>
        <taxon>Streptophyta</taxon>
        <taxon>Embryophyta</taxon>
        <taxon>Tracheophyta</taxon>
        <taxon>Spermatophyta</taxon>
        <taxon>Magnoliopsida</taxon>
        <taxon>eudicotyledons</taxon>
        <taxon>Gunneridae</taxon>
        <taxon>Pentapetalae</taxon>
        <taxon>rosids</taxon>
        <taxon>fabids</taxon>
        <taxon>Malpighiales</taxon>
        <taxon>Salicaceae</taxon>
        <taxon>Saliceae</taxon>
        <taxon>Populus</taxon>
    </lineage>
</organism>
<gene>
    <name type="ORF">POPTRDRAFT_578614</name>
</gene>
<keyword id="KW-1003">Cell membrane</keyword>
<keyword id="KW-0472">Membrane</keyword>
<keyword id="KW-1185">Reference proteome</keyword>
<keyword id="KW-0812">Transmembrane</keyword>
<keyword id="KW-1133">Transmembrane helix</keyword>
<protein>
    <recommendedName>
        <fullName>CASP-like protein 2C1</fullName>
        <shortName>PtCASPL2C1</shortName>
    </recommendedName>
</protein>
<accession>B9IM09</accession>
<feature type="chain" id="PRO_0000412047" description="CASP-like protein 2C1">
    <location>
        <begin position="1"/>
        <end position="181"/>
    </location>
</feature>
<feature type="topological domain" description="Cytoplasmic" evidence="2">
    <location>
        <begin position="1"/>
        <end position="7"/>
    </location>
</feature>
<feature type="transmembrane region" description="Helical" evidence="2">
    <location>
        <begin position="8"/>
        <end position="28"/>
    </location>
</feature>
<feature type="topological domain" description="Extracellular" evidence="2">
    <location>
        <begin position="29"/>
        <end position="49"/>
    </location>
</feature>
<feature type="transmembrane region" description="Helical" evidence="2">
    <location>
        <begin position="50"/>
        <end position="70"/>
    </location>
</feature>
<feature type="topological domain" description="Cytoplasmic" evidence="2">
    <location>
        <begin position="71"/>
        <end position="98"/>
    </location>
</feature>
<feature type="transmembrane region" description="Helical" evidence="2">
    <location>
        <begin position="99"/>
        <end position="119"/>
    </location>
</feature>
<feature type="topological domain" description="Extracellular" evidence="2">
    <location>
        <begin position="120"/>
        <end position="140"/>
    </location>
</feature>
<feature type="transmembrane region" description="Helical" evidence="2">
    <location>
        <begin position="141"/>
        <end position="161"/>
    </location>
</feature>
<feature type="topological domain" description="Cytoplasmic" evidence="2">
    <location>
        <begin position="162"/>
        <end position="181"/>
    </location>
</feature>
<dbReference type="EMBL" id="CM009307">
    <property type="protein sequence ID" value="EEF03629.1"/>
    <property type="status" value="ALT_SEQ"/>
    <property type="molecule type" value="Genomic_DNA"/>
</dbReference>
<dbReference type="SMR" id="B9IM09"/>
<dbReference type="FunCoup" id="B9IM09">
    <property type="interactions" value="144"/>
</dbReference>
<dbReference type="STRING" id="3694.B9IM09"/>
<dbReference type="EnsemblPlants" id="Potri.018G094500.1.v4.1">
    <property type="protein sequence ID" value="Potri.018G094500.1.v4.1"/>
    <property type="gene ID" value="Potri.018G094500.v4.1"/>
</dbReference>
<dbReference type="Gramene" id="Potri.018G094500.1.v4.1">
    <property type="protein sequence ID" value="Potri.018G094500.1.v4.1"/>
    <property type="gene ID" value="Potri.018G094500.v4.1"/>
</dbReference>
<dbReference type="InParanoid" id="B9IM09"/>
<dbReference type="OMA" id="WMKICNR"/>
<dbReference type="OrthoDB" id="689315at2759"/>
<dbReference type="Proteomes" id="UP000006729">
    <property type="component" value="Chromosome 18"/>
</dbReference>
<dbReference type="ExpressionAtlas" id="B9IM09">
    <property type="expression patterns" value="baseline"/>
</dbReference>
<dbReference type="GO" id="GO:0005886">
    <property type="term" value="C:plasma membrane"/>
    <property type="evidence" value="ECO:0007669"/>
    <property type="project" value="UniProtKB-SubCell"/>
</dbReference>
<dbReference type="InterPro" id="IPR006459">
    <property type="entry name" value="CASP/CASPL"/>
</dbReference>
<dbReference type="InterPro" id="IPR006702">
    <property type="entry name" value="CASP_dom"/>
</dbReference>
<dbReference type="NCBIfam" id="TIGR01569">
    <property type="entry name" value="A_tha_TIGR01569"/>
    <property type="match status" value="1"/>
</dbReference>
<dbReference type="PANTHER" id="PTHR33573:SF30">
    <property type="entry name" value="CASP-LIKE PROTEIN 2C1-RELATED"/>
    <property type="match status" value="1"/>
</dbReference>
<dbReference type="PANTHER" id="PTHR33573">
    <property type="entry name" value="CASP-LIKE PROTEIN 4A4"/>
    <property type="match status" value="1"/>
</dbReference>
<dbReference type="Pfam" id="PF04535">
    <property type="entry name" value="CASP_dom"/>
    <property type="match status" value="1"/>
</dbReference>
<evidence type="ECO:0000250" key="1"/>
<evidence type="ECO:0000255" key="2"/>
<evidence type="ECO:0000305" key="3"/>